<accession>A5UH15</accession>
<protein>
    <recommendedName>
        <fullName evidence="1">Regulator of ribonuclease activity A</fullName>
    </recommendedName>
</protein>
<reference key="1">
    <citation type="journal article" date="2007" name="Genome Biol.">
        <title>Characterization and modeling of the Haemophilus influenzae core and supragenomes based on the complete genomic sequences of Rd and 12 clinical nontypeable strains.</title>
        <authorList>
            <person name="Hogg J.S."/>
            <person name="Hu F.Z."/>
            <person name="Janto B."/>
            <person name="Boissy R."/>
            <person name="Hayes J."/>
            <person name="Keefe R."/>
            <person name="Post J.C."/>
            <person name="Ehrlich G.D."/>
        </authorList>
    </citation>
    <scope>NUCLEOTIDE SEQUENCE [LARGE SCALE GENOMIC DNA]</scope>
    <source>
        <strain>PittGG</strain>
    </source>
</reference>
<name>RRAA_HAEIG</name>
<feature type="chain" id="PRO_1000013842" description="Regulator of ribonuclease activity A">
    <location>
        <begin position="1"/>
        <end position="162"/>
    </location>
</feature>
<sequence length="162" mass="17388">MFIDTSELCDLYAEQVDVVEPIFSSFGGVSNFYGKVTTVKCFESNGLIAEVLEENGEGRVLVIDGGGAVRRGLIDAELAQLAVDNGWEGIIVYGAVRQIQQLENLDIGIHALAPIPVSADESSAGESDIPVNFGGVTFFPEDYIYADLTGIILSQEPLDLED</sequence>
<evidence type="ECO:0000255" key="1">
    <source>
        <dbReference type="HAMAP-Rule" id="MF_00471"/>
    </source>
</evidence>
<gene>
    <name evidence="1" type="primary">rraA</name>
    <name type="ordered locus">CGSHiGG_05800</name>
</gene>
<organism>
    <name type="scientific">Haemophilus influenzae (strain PittGG)</name>
    <dbReference type="NCBI Taxonomy" id="374931"/>
    <lineage>
        <taxon>Bacteria</taxon>
        <taxon>Pseudomonadati</taxon>
        <taxon>Pseudomonadota</taxon>
        <taxon>Gammaproteobacteria</taxon>
        <taxon>Pasteurellales</taxon>
        <taxon>Pasteurellaceae</taxon>
        <taxon>Haemophilus</taxon>
    </lineage>
</organism>
<keyword id="KW-0963">Cytoplasm</keyword>
<proteinExistence type="inferred from homology"/>
<dbReference type="EMBL" id="CP000672">
    <property type="protein sequence ID" value="ABR00071.1"/>
    <property type="molecule type" value="Genomic_DNA"/>
</dbReference>
<dbReference type="SMR" id="A5UH15"/>
<dbReference type="KEGG" id="hiq:CGSHiGG_05800"/>
<dbReference type="HOGENOM" id="CLU_072626_4_0_6"/>
<dbReference type="Proteomes" id="UP000001990">
    <property type="component" value="Chromosome"/>
</dbReference>
<dbReference type="GO" id="GO:0005737">
    <property type="term" value="C:cytoplasm"/>
    <property type="evidence" value="ECO:0007669"/>
    <property type="project" value="UniProtKB-SubCell"/>
</dbReference>
<dbReference type="GO" id="GO:0060698">
    <property type="term" value="F:endoribonuclease inhibitor activity"/>
    <property type="evidence" value="ECO:0007669"/>
    <property type="project" value="UniProtKB-UniRule"/>
</dbReference>
<dbReference type="GO" id="GO:0019899">
    <property type="term" value="F:enzyme binding"/>
    <property type="evidence" value="ECO:0007669"/>
    <property type="project" value="UniProtKB-UniRule"/>
</dbReference>
<dbReference type="GO" id="GO:0051252">
    <property type="term" value="P:regulation of RNA metabolic process"/>
    <property type="evidence" value="ECO:0007669"/>
    <property type="project" value="InterPro"/>
</dbReference>
<dbReference type="CDD" id="cd16841">
    <property type="entry name" value="RraA_family"/>
    <property type="match status" value="1"/>
</dbReference>
<dbReference type="Gene3D" id="3.50.30.40">
    <property type="entry name" value="Ribonuclease E inhibitor RraA/RraA-like"/>
    <property type="match status" value="1"/>
</dbReference>
<dbReference type="HAMAP" id="MF_00471">
    <property type="entry name" value="RraA"/>
    <property type="match status" value="1"/>
</dbReference>
<dbReference type="InterPro" id="IPR010203">
    <property type="entry name" value="RraA"/>
</dbReference>
<dbReference type="InterPro" id="IPR005493">
    <property type="entry name" value="RraA/RraA-like"/>
</dbReference>
<dbReference type="InterPro" id="IPR036704">
    <property type="entry name" value="RraA/RraA-like_sf"/>
</dbReference>
<dbReference type="InterPro" id="IPR014339">
    <property type="entry name" value="RraA_gpbac"/>
</dbReference>
<dbReference type="NCBIfam" id="TIGR01935">
    <property type="entry name" value="NOT-MenG"/>
    <property type="match status" value="1"/>
</dbReference>
<dbReference type="NCBIfam" id="NF006875">
    <property type="entry name" value="PRK09372.1"/>
    <property type="match status" value="1"/>
</dbReference>
<dbReference type="NCBIfam" id="TIGR02998">
    <property type="entry name" value="RraA_entero"/>
    <property type="match status" value="1"/>
</dbReference>
<dbReference type="PANTHER" id="PTHR33254">
    <property type="entry name" value="4-HYDROXY-4-METHYL-2-OXOGLUTARATE ALDOLASE 3-RELATED"/>
    <property type="match status" value="1"/>
</dbReference>
<dbReference type="PANTHER" id="PTHR33254:SF29">
    <property type="entry name" value="REGULATOR OF RIBONUCLEASE ACTIVITY A"/>
    <property type="match status" value="1"/>
</dbReference>
<dbReference type="Pfam" id="PF03737">
    <property type="entry name" value="RraA-like"/>
    <property type="match status" value="1"/>
</dbReference>
<dbReference type="SUPFAM" id="SSF89562">
    <property type="entry name" value="RraA-like"/>
    <property type="match status" value="1"/>
</dbReference>
<comment type="function">
    <text evidence="1">Globally modulates RNA abundance by binding to RNase E (Rne) and regulating its endonucleolytic activity. Can modulate Rne action in a substrate-dependent manner by altering the composition of the degradosome. Modulates RNA-binding and helicase activities of the degradosome.</text>
</comment>
<comment type="subunit">
    <text evidence="1">Homotrimer. Binds to both RNA-binding sites in the C-terminal region of Rne and to RhlB.</text>
</comment>
<comment type="subcellular location">
    <subcellularLocation>
        <location evidence="1">Cytoplasm</location>
    </subcellularLocation>
</comment>
<comment type="similarity">
    <text evidence="1">Belongs to the RraA family.</text>
</comment>